<name>SYH_STRAW</name>
<protein>
    <recommendedName>
        <fullName evidence="1">Histidine--tRNA ligase</fullName>
        <ecNumber evidence="1">6.1.1.21</ecNumber>
    </recommendedName>
    <alternativeName>
        <fullName evidence="1">Histidyl-tRNA synthetase</fullName>
        <shortName evidence="1">HisRS</shortName>
    </alternativeName>
</protein>
<proteinExistence type="inferred from homology"/>
<gene>
    <name evidence="1" type="primary">hisS</name>
    <name type="ordered locus">SAV_6844</name>
</gene>
<accession>Q827T0</accession>
<reference key="1">
    <citation type="journal article" date="2001" name="Proc. Natl. Acad. Sci. U.S.A.">
        <title>Genome sequence of an industrial microorganism Streptomyces avermitilis: deducing the ability of producing secondary metabolites.</title>
        <authorList>
            <person name="Omura S."/>
            <person name="Ikeda H."/>
            <person name="Ishikawa J."/>
            <person name="Hanamoto A."/>
            <person name="Takahashi C."/>
            <person name="Shinose M."/>
            <person name="Takahashi Y."/>
            <person name="Horikawa H."/>
            <person name="Nakazawa H."/>
            <person name="Osonoe T."/>
            <person name="Kikuchi H."/>
            <person name="Shiba T."/>
            <person name="Sakaki Y."/>
            <person name="Hattori M."/>
        </authorList>
    </citation>
    <scope>NUCLEOTIDE SEQUENCE [LARGE SCALE GENOMIC DNA]</scope>
    <source>
        <strain>ATCC 31267 / DSM 46492 / JCM 5070 / NBRC 14893 / NCIMB 12804 / NRRL 8165 / MA-4680</strain>
    </source>
</reference>
<reference key="2">
    <citation type="journal article" date="2003" name="Nat. Biotechnol.">
        <title>Complete genome sequence and comparative analysis of the industrial microorganism Streptomyces avermitilis.</title>
        <authorList>
            <person name="Ikeda H."/>
            <person name="Ishikawa J."/>
            <person name="Hanamoto A."/>
            <person name="Shinose M."/>
            <person name="Kikuchi H."/>
            <person name="Shiba T."/>
            <person name="Sakaki Y."/>
            <person name="Hattori M."/>
            <person name="Omura S."/>
        </authorList>
    </citation>
    <scope>NUCLEOTIDE SEQUENCE [LARGE SCALE GENOMIC DNA]</scope>
    <source>
        <strain>ATCC 31267 / DSM 46492 / JCM 5070 / NBRC 14893 / NCIMB 12804 / NRRL 8165 / MA-4680</strain>
    </source>
</reference>
<organism>
    <name type="scientific">Streptomyces avermitilis (strain ATCC 31267 / DSM 46492 / JCM 5070 / NBRC 14893 / NCIMB 12804 / NRRL 8165 / MA-4680)</name>
    <dbReference type="NCBI Taxonomy" id="227882"/>
    <lineage>
        <taxon>Bacteria</taxon>
        <taxon>Bacillati</taxon>
        <taxon>Actinomycetota</taxon>
        <taxon>Actinomycetes</taxon>
        <taxon>Kitasatosporales</taxon>
        <taxon>Streptomycetaceae</taxon>
        <taxon>Streptomyces</taxon>
    </lineage>
</organism>
<feature type="chain" id="PRO_0000136273" description="Histidine--tRNA ligase">
    <location>
        <begin position="1"/>
        <end position="420"/>
    </location>
</feature>
<sequence>MSTFKAPKGTYDLIPPDSAKYLAVREAIAAPLRNSGYGYIETPGFENVELFARGVGESTDIVTKEMYAFETKGGDRLALRPEGTASVLRAALEANLHKAGNLPVKLWYSGSYYRYERPQKGRYRHFSQVGAEAIGAEDPALDAELIILADQSYRSLGLRNFRILLNSLGDKECRPVYRAALQDFLRGLDLDEDTLRRAEINPLRVLDDKREDVQKQLGGAPLLRDYLCDACKAYHEEVRELITAAGVSFEDDAKLVRGLDYYTRTTFEFVHDGLGSQSAVGGGGRYDGLSEMIGGPALPSVGWALGVDRTVLALEAEGVELELPSSTSVFAVPLGEEARRILFAKVTELRKVGIAADFAYGGKGLKGAMKNANRSGARYTVVAGERDLAEGVVQLKDMESGEQTAVGVNEIVAELEARLG</sequence>
<dbReference type="EC" id="6.1.1.21" evidence="1"/>
<dbReference type="EMBL" id="BA000030">
    <property type="protein sequence ID" value="BAC74555.1"/>
    <property type="molecule type" value="Genomic_DNA"/>
</dbReference>
<dbReference type="RefSeq" id="WP_010988242.1">
    <property type="nucleotide sequence ID" value="NZ_JZJK01000082.1"/>
</dbReference>
<dbReference type="SMR" id="Q827T0"/>
<dbReference type="GeneID" id="41543919"/>
<dbReference type="KEGG" id="sma:SAVERM_6844"/>
<dbReference type="eggNOG" id="COG0124">
    <property type="taxonomic scope" value="Bacteria"/>
</dbReference>
<dbReference type="HOGENOM" id="CLU_025113_1_1_11"/>
<dbReference type="OrthoDB" id="9800814at2"/>
<dbReference type="Proteomes" id="UP000000428">
    <property type="component" value="Chromosome"/>
</dbReference>
<dbReference type="GO" id="GO:0005737">
    <property type="term" value="C:cytoplasm"/>
    <property type="evidence" value="ECO:0007669"/>
    <property type="project" value="UniProtKB-SubCell"/>
</dbReference>
<dbReference type="GO" id="GO:0005524">
    <property type="term" value="F:ATP binding"/>
    <property type="evidence" value="ECO:0007669"/>
    <property type="project" value="UniProtKB-UniRule"/>
</dbReference>
<dbReference type="GO" id="GO:0004821">
    <property type="term" value="F:histidine-tRNA ligase activity"/>
    <property type="evidence" value="ECO:0007669"/>
    <property type="project" value="UniProtKB-UniRule"/>
</dbReference>
<dbReference type="GO" id="GO:0006427">
    <property type="term" value="P:histidyl-tRNA aminoacylation"/>
    <property type="evidence" value="ECO:0007669"/>
    <property type="project" value="UniProtKB-UniRule"/>
</dbReference>
<dbReference type="CDD" id="cd00773">
    <property type="entry name" value="HisRS-like_core"/>
    <property type="match status" value="1"/>
</dbReference>
<dbReference type="CDD" id="cd00859">
    <property type="entry name" value="HisRS_anticodon"/>
    <property type="match status" value="1"/>
</dbReference>
<dbReference type="FunFam" id="3.30.930.10:FF:000058">
    <property type="entry name" value="Histidine--tRNA ligase"/>
    <property type="match status" value="1"/>
</dbReference>
<dbReference type="FunFam" id="3.40.50.800:FF:000021">
    <property type="entry name" value="Histidine--tRNA ligase"/>
    <property type="match status" value="1"/>
</dbReference>
<dbReference type="Gene3D" id="3.40.50.800">
    <property type="entry name" value="Anticodon-binding domain"/>
    <property type="match status" value="1"/>
</dbReference>
<dbReference type="Gene3D" id="3.30.930.10">
    <property type="entry name" value="Bira Bifunctional Protein, Domain 2"/>
    <property type="match status" value="1"/>
</dbReference>
<dbReference type="HAMAP" id="MF_00127">
    <property type="entry name" value="His_tRNA_synth"/>
    <property type="match status" value="1"/>
</dbReference>
<dbReference type="InterPro" id="IPR006195">
    <property type="entry name" value="aa-tRNA-synth_II"/>
</dbReference>
<dbReference type="InterPro" id="IPR045864">
    <property type="entry name" value="aa-tRNA-synth_II/BPL/LPL"/>
</dbReference>
<dbReference type="InterPro" id="IPR004154">
    <property type="entry name" value="Anticodon-bd"/>
</dbReference>
<dbReference type="InterPro" id="IPR036621">
    <property type="entry name" value="Anticodon-bd_dom_sf"/>
</dbReference>
<dbReference type="InterPro" id="IPR015807">
    <property type="entry name" value="His-tRNA-ligase"/>
</dbReference>
<dbReference type="InterPro" id="IPR041715">
    <property type="entry name" value="HisRS-like_core"/>
</dbReference>
<dbReference type="InterPro" id="IPR004516">
    <property type="entry name" value="HisRS/HisZ"/>
</dbReference>
<dbReference type="InterPro" id="IPR033656">
    <property type="entry name" value="HisRS_anticodon"/>
</dbReference>
<dbReference type="NCBIfam" id="TIGR00442">
    <property type="entry name" value="hisS"/>
    <property type="match status" value="1"/>
</dbReference>
<dbReference type="PANTHER" id="PTHR43707:SF1">
    <property type="entry name" value="HISTIDINE--TRNA LIGASE, MITOCHONDRIAL-RELATED"/>
    <property type="match status" value="1"/>
</dbReference>
<dbReference type="PANTHER" id="PTHR43707">
    <property type="entry name" value="HISTIDYL-TRNA SYNTHETASE"/>
    <property type="match status" value="1"/>
</dbReference>
<dbReference type="Pfam" id="PF03129">
    <property type="entry name" value="HGTP_anticodon"/>
    <property type="match status" value="1"/>
</dbReference>
<dbReference type="Pfam" id="PF13393">
    <property type="entry name" value="tRNA-synt_His"/>
    <property type="match status" value="1"/>
</dbReference>
<dbReference type="PIRSF" id="PIRSF001549">
    <property type="entry name" value="His-tRNA_synth"/>
    <property type="match status" value="1"/>
</dbReference>
<dbReference type="SUPFAM" id="SSF52954">
    <property type="entry name" value="Class II aaRS ABD-related"/>
    <property type="match status" value="1"/>
</dbReference>
<dbReference type="SUPFAM" id="SSF55681">
    <property type="entry name" value="Class II aaRS and biotin synthetases"/>
    <property type="match status" value="1"/>
</dbReference>
<dbReference type="PROSITE" id="PS50862">
    <property type="entry name" value="AA_TRNA_LIGASE_II"/>
    <property type="match status" value="1"/>
</dbReference>
<evidence type="ECO:0000255" key="1">
    <source>
        <dbReference type="HAMAP-Rule" id="MF_00127"/>
    </source>
</evidence>
<keyword id="KW-0030">Aminoacyl-tRNA synthetase</keyword>
<keyword id="KW-0067">ATP-binding</keyword>
<keyword id="KW-0963">Cytoplasm</keyword>
<keyword id="KW-0436">Ligase</keyword>
<keyword id="KW-0547">Nucleotide-binding</keyword>
<keyword id="KW-0648">Protein biosynthesis</keyword>
<keyword id="KW-1185">Reference proteome</keyword>
<comment type="catalytic activity">
    <reaction evidence="1">
        <text>tRNA(His) + L-histidine + ATP = L-histidyl-tRNA(His) + AMP + diphosphate + H(+)</text>
        <dbReference type="Rhea" id="RHEA:17313"/>
        <dbReference type="Rhea" id="RHEA-COMP:9665"/>
        <dbReference type="Rhea" id="RHEA-COMP:9689"/>
        <dbReference type="ChEBI" id="CHEBI:15378"/>
        <dbReference type="ChEBI" id="CHEBI:30616"/>
        <dbReference type="ChEBI" id="CHEBI:33019"/>
        <dbReference type="ChEBI" id="CHEBI:57595"/>
        <dbReference type="ChEBI" id="CHEBI:78442"/>
        <dbReference type="ChEBI" id="CHEBI:78527"/>
        <dbReference type="ChEBI" id="CHEBI:456215"/>
        <dbReference type="EC" id="6.1.1.21"/>
    </reaction>
</comment>
<comment type="subunit">
    <text evidence="1">Homodimer.</text>
</comment>
<comment type="subcellular location">
    <subcellularLocation>
        <location evidence="1">Cytoplasm</location>
    </subcellularLocation>
</comment>
<comment type="similarity">
    <text evidence="1">Belongs to the class-II aminoacyl-tRNA synthetase family.</text>
</comment>